<organism>
    <name type="scientific">Bovine coronavirus (strain 98TXSF-110-LUN)</name>
    <name type="common">BCoV-LUN</name>
    <name type="synonym">BCV</name>
    <dbReference type="NCBI Taxonomy" id="233264"/>
    <lineage>
        <taxon>Viruses</taxon>
        <taxon>Riboviria</taxon>
        <taxon>Orthornavirae</taxon>
        <taxon>Pisuviricota</taxon>
        <taxon>Pisoniviricetes</taxon>
        <taxon>Nidovirales</taxon>
        <taxon>Cornidovirineae</taxon>
        <taxon>Coronaviridae</taxon>
        <taxon>Orthocoronavirinae</taxon>
        <taxon>Betacoronavirus</taxon>
        <taxon>Embecovirus</taxon>
        <taxon>Betacoronavirus 1</taxon>
    </lineage>
</organism>
<accession>P0C2Q3</accession>
<accession>Q77H72</accession>
<accession>Q77WX9</accession>
<protein>
    <recommendedName>
        <fullName evidence="1">Envelope small membrane protein</fullName>
        <shortName evidence="1">E protein</shortName>
        <shortName evidence="1">sM protein</shortName>
    </recommendedName>
</protein>
<feature type="chain" id="PRO_0000283969" description="Envelope small membrane protein">
    <location>
        <begin position="1"/>
        <end position="84"/>
    </location>
</feature>
<feature type="topological domain" description="Virion surface" evidence="1">
    <location>
        <begin position="1"/>
        <end position="18"/>
    </location>
</feature>
<feature type="transmembrane region" description="Helical" evidence="1">
    <location>
        <begin position="19"/>
        <end position="39"/>
    </location>
</feature>
<feature type="topological domain" description="Intravirion" evidence="1">
    <location>
        <begin position="40"/>
        <end position="80"/>
    </location>
</feature>
<dbReference type="EMBL" id="AF391542">
    <property type="protein sequence ID" value="AAL57311.1"/>
    <property type="molecule type" value="Genomic_RNA"/>
</dbReference>
<dbReference type="RefSeq" id="NP_150081.1">
    <property type="nucleotide sequence ID" value="NC_003045.1"/>
</dbReference>
<dbReference type="GeneID" id="921685"/>
<dbReference type="KEGG" id="vg:921685"/>
<dbReference type="Proteomes" id="UP000008571">
    <property type="component" value="Genome"/>
</dbReference>
<dbReference type="GO" id="GO:0044178">
    <property type="term" value="C:host cell Golgi membrane"/>
    <property type="evidence" value="ECO:0007669"/>
    <property type="project" value="UniProtKB-SubCell"/>
</dbReference>
<dbReference type="GO" id="GO:0016020">
    <property type="term" value="C:membrane"/>
    <property type="evidence" value="ECO:0007669"/>
    <property type="project" value="UniProtKB-UniRule"/>
</dbReference>
<dbReference type="GO" id="GO:0140975">
    <property type="term" value="P:disruption of cellular anatomical structure in another organism"/>
    <property type="evidence" value="ECO:0007669"/>
    <property type="project" value="UniProtKB-UniRule"/>
</dbReference>
<dbReference type="GO" id="GO:0046760">
    <property type="term" value="P:viral budding from Golgi membrane"/>
    <property type="evidence" value="ECO:0007669"/>
    <property type="project" value="UniProtKB-UniRule"/>
</dbReference>
<dbReference type="CDD" id="cd21532">
    <property type="entry name" value="HKU1-CoV-like_E"/>
    <property type="match status" value="1"/>
</dbReference>
<dbReference type="HAMAP" id="MF_04204">
    <property type="entry name" value="BETA_CORONA_E"/>
    <property type="match status" value="1"/>
</dbReference>
<dbReference type="InterPro" id="IPR043506">
    <property type="entry name" value="E_protein_bCoV"/>
</dbReference>
<dbReference type="InterPro" id="IPR003873">
    <property type="entry name" value="E_protein_CoV"/>
</dbReference>
<dbReference type="Pfam" id="PF02723">
    <property type="entry name" value="CoV_E"/>
    <property type="match status" value="1"/>
</dbReference>
<dbReference type="PROSITE" id="PS51926">
    <property type="entry name" value="COV_E"/>
    <property type="match status" value="1"/>
</dbReference>
<keyword id="KW-0053">Apoptosis</keyword>
<keyword id="KW-1040">Host Golgi apparatus</keyword>
<keyword id="KW-1043">Host membrane</keyword>
<keyword id="KW-0472">Membrane</keyword>
<keyword id="KW-0812">Transmembrane</keyword>
<keyword id="KW-1133">Transmembrane helix</keyword>
<organismHost>
    <name type="scientific">Bos taurus</name>
    <name type="common">Bovine</name>
    <dbReference type="NCBI Taxonomy" id="9913"/>
</organismHost>
<proteinExistence type="inferred from homology"/>
<reference key="1">
    <citation type="journal article" date="2001" name="J. Gen. Virol.">
        <title>Comparison of genomic and predicted amino acid sequences of respiratory and enteric bovine coronaviruses isolated from the same animal with fatal shipping pneumonia.</title>
        <authorList>
            <person name="Chouljenko V.N."/>
            <person name="Lin X.Q."/>
            <person name="Storz J."/>
            <person name="Kousoulas K.G."/>
            <person name="Gorbalenya A.E."/>
        </authorList>
    </citation>
    <scope>NUCLEOTIDE SEQUENCE [GENOMIC RNA]</scope>
</reference>
<name>VEMP_CVBLU</name>
<comment type="function">
    <text evidence="1">Plays a central role in virus morphogenesis and assembly. Acts as a viroporin and self-assembles in host membranes forming pentameric protein-lipid pores that allow ion transport. Also plays a role in the induction of apoptosis.</text>
</comment>
<comment type="subunit">
    <text evidence="1">Homopentamer. Interacts with membrane protein M in the budding compartment of the host cell, which is located between endoplasmic reticulum and the Golgi complex. Interacts with Nucleoprotein.</text>
</comment>
<comment type="subcellular location">
    <subcellularLocation>
        <location evidence="1">Host Golgi apparatus membrane</location>
        <topology evidence="1">Single-pass type III membrane protein</topology>
    </subcellularLocation>
    <text evidence="1">The cytoplasmic tail functions as a Golgi complex-targeting signal.</text>
</comment>
<comment type="similarity">
    <text evidence="1">Belongs to the betacoronaviruses E protein family.</text>
</comment>
<gene>
    <name evidence="1" type="primary">E</name>
    <name type="synonym">sM</name>
    <name type="ORF">5b</name>
</gene>
<evidence type="ECO:0000255" key="1">
    <source>
        <dbReference type="HAMAP-Rule" id="MF_04204"/>
    </source>
</evidence>
<sequence>MFMADAYFADTVWYVGQIIFIVAICLLVIIVVVAFLATFKLCIQLCGMCNTLVLSPSIYVFNRGRQFYEFYNDVKPPVLDVDDV</sequence>